<dbReference type="EMBL" id="CP001217">
    <property type="protein sequence ID" value="ACJ08430.1"/>
    <property type="molecule type" value="Genomic_DNA"/>
</dbReference>
<dbReference type="SMR" id="B6JNF2"/>
<dbReference type="KEGG" id="hpp:HPP12_1278"/>
<dbReference type="HOGENOM" id="CLU_083987_3_2_7"/>
<dbReference type="Proteomes" id="UP000008198">
    <property type="component" value="Chromosome"/>
</dbReference>
<dbReference type="GO" id="GO:0022625">
    <property type="term" value="C:cytosolic large ribosomal subunit"/>
    <property type="evidence" value="ECO:0007669"/>
    <property type="project" value="TreeGrafter"/>
</dbReference>
<dbReference type="GO" id="GO:0019843">
    <property type="term" value="F:rRNA binding"/>
    <property type="evidence" value="ECO:0007669"/>
    <property type="project" value="UniProtKB-UniRule"/>
</dbReference>
<dbReference type="GO" id="GO:0003735">
    <property type="term" value="F:structural constituent of ribosome"/>
    <property type="evidence" value="ECO:0007669"/>
    <property type="project" value="InterPro"/>
</dbReference>
<dbReference type="GO" id="GO:0006412">
    <property type="term" value="P:translation"/>
    <property type="evidence" value="ECO:0007669"/>
    <property type="project" value="UniProtKB-UniRule"/>
</dbReference>
<dbReference type="CDD" id="cd00336">
    <property type="entry name" value="Ribosomal_L22"/>
    <property type="match status" value="1"/>
</dbReference>
<dbReference type="FunFam" id="3.90.470.10:FF:000007">
    <property type="entry name" value="50S ribosomal protein L22"/>
    <property type="match status" value="1"/>
</dbReference>
<dbReference type="Gene3D" id="3.90.470.10">
    <property type="entry name" value="Ribosomal protein L22/L17"/>
    <property type="match status" value="1"/>
</dbReference>
<dbReference type="HAMAP" id="MF_01331_B">
    <property type="entry name" value="Ribosomal_uL22_B"/>
    <property type="match status" value="1"/>
</dbReference>
<dbReference type="InterPro" id="IPR001063">
    <property type="entry name" value="Ribosomal_uL22"/>
</dbReference>
<dbReference type="InterPro" id="IPR005727">
    <property type="entry name" value="Ribosomal_uL22_bac/chlpt-type"/>
</dbReference>
<dbReference type="InterPro" id="IPR047867">
    <property type="entry name" value="Ribosomal_uL22_bac/org-type"/>
</dbReference>
<dbReference type="InterPro" id="IPR018260">
    <property type="entry name" value="Ribosomal_uL22_CS"/>
</dbReference>
<dbReference type="InterPro" id="IPR036394">
    <property type="entry name" value="Ribosomal_uL22_sf"/>
</dbReference>
<dbReference type="NCBIfam" id="TIGR01044">
    <property type="entry name" value="rplV_bact"/>
    <property type="match status" value="1"/>
</dbReference>
<dbReference type="PANTHER" id="PTHR13501">
    <property type="entry name" value="CHLOROPLAST 50S RIBOSOMAL PROTEIN L22-RELATED"/>
    <property type="match status" value="1"/>
</dbReference>
<dbReference type="PANTHER" id="PTHR13501:SF8">
    <property type="entry name" value="LARGE RIBOSOMAL SUBUNIT PROTEIN UL22M"/>
    <property type="match status" value="1"/>
</dbReference>
<dbReference type="Pfam" id="PF00237">
    <property type="entry name" value="Ribosomal_L22"/>
    <property type="match status" value="1"/>
</dbReference>
<dbReference type="SUPFAM" id="SSF54843">
    <property type="entry name" value="Ribosomal protein L22"/>
    <property type="match status" value="1"/>
</dbReference>
<dbReference type="PROSITE" id="PS00464">
    <property type="entry name" value="RIBOSOMAL_L22"/>
    <property type="match status" value="1"/>
</dbReference>
<evidence type="ECO:0000255" key="1">
    <source>
        <dbReference type="HAMAP-Rule" id="MF_01331"/>
    </source>
</evidence>
<evidence type="ECO:0000256" key="2">
    <source>
        <dbReference type="SAM" id="MobiDB-lite"/>
    </source>
</evidence>
<evidence type="ECO:0000305" key="3"/>
<gene>
    <name evidence="1" type="primary">rplV</name>
    <name type="ordered locus">HPP12_1278</name>
</gene>
<keyword id="KW-0687">Ribonucleoprotein</keyword>
<keyword id="KW-0689">Ribosomal protein</keyword>
<keyword id="KW-0694">RNA-binding</keyword>
<keyword id="KW-0699">rRNA-binding</keyword>
<protein>
    <recommendedName>
        <fullName evidence="1">Large ribosomal subunit protein uL22</fullName>
    </recommendedName>
    <alternativeName>
        <fullName evidence="3">50S ribosomal protein L22</fullName>
    </alternativeName>
</protein>
<organism>
    <name type="scientific">Helicobacter pylori (strain P12)</name>
    <dbReference type="NCBI Taxonomy" id="570508"/>
    <lineage>
        <taxon>Bacteria</taxon>
        <taxon>Pseudomonadati</taxon>
        <taxon>Campylobacterota</taxon>
        <taxon>Epsilonproteobacteria</taxon>
        <taxon>Campylobacterales</taxon>
        <taxon>Helicobacteraceae</taxon>
        <taxon>Helicobacter</taxon>
    </lineage>
</organism>
<comment type="function">
    <text evidence="1">This protein binds specifically to 23S rRNA; its binding is stimulated by other ribosomal proteins, e.g. L4, L17, and L20. It is important during the early stages of 50S assembly. It makes multiple contacts with different domains of the 23S rRNA in the assembled 50S subunit and ribosome (By similarity).</text>
</comment>
<comment type="function">
    <text evidence="1">The globular domain of the protein is located near the polypeptide exit tunnel on the outside of the subunit, while an extended beta-hairpin is found that lines the wall of the exit tunnel in the center of the 70S ribosome.</text>
</comment>
<comment type="subunit">
    <text evidence="1">Part of the 50S ribosomal subunit.</text>
</comment>
<comment type="similarity">
    <text evidence="1">Belongs to the universal ribosomal protein uL22 family.</text>
</comment>
<name>RL22_HELP2</name>
<accession>B6JNF2</accession>
<feature type="chain" id="PRO_1000142269" description="Large ribosomal subunit protein uL22">
    <location>
        <begin position="1"/>
        <end position="122"/>
    </location>
</feature>
<feature type="region of interest" description="Disordered" evidence="2">
    <location>
        <begin position="103"/>
        <end position="122"/>
    </location>
</feature>
<reference key="1">
    <citation type="submission" date="2008-10" db="EMBL/GenBank/DDBJ databases">
        <title>The complete genome sequence of Helicobacter pylori strain P12.</title>
        <authorList>
            <person name="Fischer W."/>
            <person name="Windhager L."/>
            <person name="Karnholz A."/>
            <person name="Zeiller M."/>
            <person name="Zimmer R."/>
            <person name="Haas R."/>
        </authorList>
    </citation>
    <scope>NUCLEOTIDE SEQUENCE [LARGE SCALE GENOMIC DNA]</scope>
    <source>
        <strain>P12</strain>
    </source>
</reference>
<sequence>MSKALLKFVRLSPTKARLIARQIQGMNAELAIASLEFTPNKAARVLSKVVASAVANGSLDAKSALIVSCRVDAGPVLRRSIPRAKGRATAIRKPTSHVFVEVVEGKEMKSSKSHKKNQAEGK</sequence>
<proteinExistence type="inferred from homology"/>